<feature type="chain" id="PRO_0000126800" description="Phenylalanine--tRNA ligase alpha subunit">
    <location>
        <begin position="1"/>
        <end position="333"/>
    </location>
</feature>
<feature type="binding site" evidence="1">
    <location>
        <position position="254"/>
    </location>
    <ligand>
        <name>Mg(2+)</name>
        <dbReference type="ChEBI" id="CHEBI:18420"/>
        <note>shared with beta subunit</note>
    </ligand>
</feature>
<comment type="catalytic activity">
    <reaction>
        <text>tRNA(Phe) + L-phenylalanine + ATP = L-phenylalanyl-tRNA(Phe) + AMP + diphosphate + H(+)</text>
        <dbReference type="Rhea" id="RHEA:19413"/>
        <dbReference type="Rhea" id="RHEA-COMP:9668"/>
        <dbReference type="Rhea" id="RHEA-COMP:9699"/>
        <dbReference type="ChEBI" id="CHEBI:15378"/>
        <dbReference type="ChEBI" id="CHEBI:30616"/>
        <dbReference type="ChEBI" id="CHEBI:33019"/>
        <dbReference type="ChEBI" id="CHEBI:58095"/>
        <dbReference type="ChEBI" id="CHEBI:78442"/>
        <dbReference type="ChEBI" id="CHEBI:78531"/>
        <dbReference type="ChEBI" id="CHEBI:456215"/>
        <dbReference type="EC" id="6.1.1.20"/>
    </reaction>
</comment>
<comment type="cofactor">
    <cofactor evidence="1">
        <name>Mg(2+)</name>
        <dbReference type="ChEBI" id="CHEBI:18420"/>
    </cofactor>
    <text evidence="1">Binds 2 magnesium ions per tetramer.</text>
</comment>
<comment type="subunit">
    <text evidence="1">Tetramer of two alpha and two beta subunits.</text>
</comment>
<comment type="subcellular location">
    <subcellularLocation>
        <location evidence="1">Cytoplasm</location>
    </subcellularLocation>
</comment>
<comment type="similarity">
    <text evidence="2">Belongs to the class-II aminoacyl-tRNA synthetase family. Phe-tRNA synthetase alpha subunit type 1 subfamily.</text>
</comment>
<organism>
    <name type="scientific">Xylella fastidiosa (strain 9a5c)</name>
    <dbReference type="NCBI Taxonomy" id="160492"/>
    <lineage>
        <taxon>Bacteria</taxon>
        <taxon>Pseudomonadati</taxon>
        <taxon>Pseudomonadota</taxon>
        <taxon>Gammaproteobacteria</taxon>
        <taxon>Lysobacterales</taxon>
        <taxon>Lysobacteraceae</taxon>
        <taxon>Xylella</taxon>
    </lineage>
</organism>
<keyword id="KW-0030">Aminoacyl-tRNA synthetase</keyword>
<keyword id="KW-0067">ATP-binding</keyword>
<keyword id="KW-0963">Cytoplasm</keyword>
<keyword id="KW-0436">Ligase</keyword>
<keyword id="KW-0460">Magnesium</keyword>
<keyword id="KW-0479">Metal-binding</keyword>
<keyword id="KW-0547">Nucleotide-binding</keyword>
<keyword id="KW-0648">Protein biosynthesis</keyword>
<proteinExistence type="inferred from homology"/>
<name>SYFA_XYLFA</name>
<reference key="1">
    <citation type="journal article" date="2000" name="Nature">
        <title>The genome sequence of the plant pathogen Xylella fastidiosa.</title>
        <authorList>
            <person name="Simpson A.J.G."/>
            <person name="Reinach F.C."/>
            <person name="Arruda P."/>
            <person name="Abreu F.A."/>
            <person name="Acencio M."/>
            <person name="Alvarenga R."/>
            <person name="Alves L.M.C."/>
            <person name="Araya J.E."/>
            <person name="Baia G.S."/>
            <person name="Baptista C.S."/>
            <person name="Barros M.H."/>
            <person name="Bonaccorsi E.D."/>
            <person name="Bordin S."/>
            <person name="Bove J.M."/>
            <person name="Briones M.R.S."/>
            <person name="Bueno M.R.P."/>
            <person name="Camargo A.A."/>
            <person name="Camargo L.E.A."/>
            <person name="Carraro D.M."/>
            <person name="Carrer H."/>
            <person name="Colauto N.B."/>
            <person name="Colombo C."/>
            <person name="Costa F.F."/>
            <person name="Costa M.C.R."/>
            <person name="Costa-Neto C.M."/>
            <person name="Coutinho L.L."/>
            <person name="Cristofani M."/>
            <person name="Dias-Neto E."/>
            <person name="Docena C."/>
            <person name="El-Dorry H."/>
            <person name="Facincani A.P."/>
            <person name="Ferreira A.J.S."/>
            <person name="Ferreira V.C.A."/>
            <person name="Ferro J.A."/>
            <person name="Fraga J.S."/>
            <person name="Franca S.C."/>
            <person name="Franco M.C."/>
            <person name="Frohme M."/>
            <person name="Furlan L.R."/>
            <person name="Garnier M."/>
            <person name="Goldman G.H."/>
            <person name="Goldman M.H.S."/>
            <person name="Gomes S.L."/>
            <person name="Gruber A."/>
            <person name="Ho P.L."/>
            <person name="Hoheisel J.D."/>
            <person name="Junqueira M.L."/>
            <person name="Kemper E.L."/>
            <person name="Kitajima J.P."/>
            <person name="Krieger J.E."/>
            <person name="Kuramae E.E."/>
            <person name="Laigret F."/>
            <person name="Lambais M.R."/>
            <person name="Leite L.C.C."/>
            <person name="Lemos E.G.M."/>
            <person name="Lemos M.V.F."/>
            <person name="Lopes S.A."/>
            <person name="Lopes C.R."/>
            <person name="Machado J.A."/>
            <person name="Machado M.A."/>
            <person name="Madeira A.M.B.N."/>
            <person name="Madeira H.M.F."/>
            <person name="Marino C.L."/>
            <person name="Marques M.V."/>
            <person name="Martins E.A.L."/>
            <person name="Martins E.M.F."/>
            <person name="Matsukuma A.Y."/>
            <person name="Menck C.F.M."/>
            <person name="Miracca E.C."/>
            <person name="Miyaki C.Y."/>
            <person name="Monteiro-Vitorello C.B."/>
            <person name="Moon D.H."/>
            <person name="Nagai M.A."/>
            <person name="Nascimento A.L.T.O."/>
            <person name="Netto L.E.S."/>
            <person name="Nhani A. Jr."/>
            <person name="Nobrega F.G."/>
            <person name="Nunes L.R."/>
            <person name="Oliveira M.A."/>
            <person name="de Oliveira M.C."/>
            <person name="de Oliveira R.C."/>
            <person name="Palmieri D.A."/>
            <person name="Paris A."/>
            <person name="Peixoto B.R."/>
            <person name="Pereira G.A.G."/>
            <person name="Pereira H.A. Jr."/>
            <person name="Pesquero J.B."/>
            <person name="Quaggio R.B."/>
            <person name="Roberto P.G."/>
            <person name="Rodrigues V."/>
            <person name="de Rosa A.J.M."/>
            <person name="de Rosa V.E. Jr."/>
            <person name="de Sa R.G."/>
            <person name="Santelli R.V."/>
            <person name="Sawasaki H.E."/>
            <person name="da Silva A.C.R."/>
            <person name="da Silva A.M."/>
            <person name="da Silva F.R."/>
            <person name="Silva W.A. Jr."/>
            <person name="da Silveira J.F."/>
            <person name="Silvestri M.L.Z."/>
            <person name="Siqueira W.J."/>
            <person name="de Souza A.A."/>
            <person name="de Souza A.P."/>
            <person name="Terenzi M.F."/>
            <person name="Truffi D."/>
            <person name="Tsai S.M."/>
            <person name="Tsuhako M.H."/>
            <person name="Vallada H."/>
            <person name="Van Sluys M.A."/>
            <person name="Verjovski-Almeida S."/>
            <person name="Vettore A.L."/>
            <person name="Zago M.A."/>
            <person name="Zatz M."/>
            <person name="Meidanis J."/>
            <person name="Setubal J.C."/>
        </authorList>
    </citation>
    <scope>NUCLEOTIDE SEQUENCE [LARGE SCALE GENOMIC DNA]</scope>
    <source>
        <strain>9a5c</strain>
    </source>
</reference>
<sequence length="333" mass="37837">MVINDIESLTDQALADVAAAQNLDHLEVLRVALLGKNGSITLQLKQLGKLPVEQRKAIGEKVNCVRDLISVALMDRKAALESAALSKRLIDERVDVTLPGRRGERGGLHPVTRTLERITEIFARLGYELVEGPEIEDDWHNFEALNFPLHHPARAMHDTFYFGDGRLLRTHTSGVQVRYMSDHRPPLRMIAAGKVYRSDSDQTHSPMFHQIEGLLIDKHATFVHLKGTLSEFLRAFFERDFEVRFRPSYFPFVEPGAEVDIAWQQSDSSVRWLEVLGCGMVHPNVLKNVGIDSECYTGFAFGLGVERFAMLRYGVDDLRAFFENDVRFLRQFS</sequence>
<gene>
    <name type="primary">pheS</name>
    <name type="ordered locus">XF_0741</name>
</gene>
<accession>Q9PFD7</accession>
<protein>
    <recommendedName>
        <fullName>Phenylalanine--tRNA ligase alpha subunit</fullName>
        <ecNumber>6.1.1.20</ecNumber>
    </recommendedName>
    <alternativeName>
        <fullName>Phenylalanyl-tRNA synthetase alpha subunit</fullName>
        <shortName>PheRS</shortName>
    </alternativeName>
</protein>
<evidence type="ECO:0000250" key="1"/>
<evidence type="ECO:0000305" key="2"/>
<dbReference type="EC" id="6.1.1.20"/>
<dbReference type="EMBL" id="AE003849">
    <property type="protein sequence ID" value="AAF83551.1"/>
    <property type="molecule type" value="Genomic_DNA"/>
</dbReference>
<dbReference type="PIR" id="B82767">
    <property type="entry name" value="B82767"/>
</dbReference>
<dbReference type="SMR" id="Q9PFD7"/>
<dbReference type="STRING" id="160492.XF_0741"/>
<dbReference type="KEGG" id="xfa:XF_0741"/>
<dbReference type="eggNOG" id="COG0016">
    <property type="taxonomic scope" value="Bacteria"/>
</dbReference>
<dbReference type="HOGENOM" id="CLU_025086_0_1_6"/>
<dbReference type="Proteomes" id="UP000000812">
    <property type="component" value="Chromosome"/>
</dbReference>
<dbReference type="GO" id="GO:0005737">
    <property type="term" value="C:cytoplasm"/>
    <property type="evidence" value="ECO:0007669"/>
    <property type="project" value="UniProtKB-SubCell"/>
</dbReference>
<dbReference type="GO" id="GO:0005524">
    <property type="term" value="F:ATP binding"/>
    <property type="evidence" value="ECO:0007669"/>
    <property type="project" value="UniProtKB-UniRule"/>
</dbReference>
<dbReference type="GO" id="GO:0000287">
    <property type="term" value="F:magnesium ion binding"/>
    <property type="evidence" value="ECO:0007669"/>
    <property type="project" value="UniProtKB-UniRule"/>
</dbReference>
<dbReference type="GO" id="GO:0004826">
    <property type="term" value="F:phenylalanine-tRNA ligase activity"/>
    <property type="evidence" value="ECO:0007669"/>
    <property type="project" value="UniProtKB-UniRule"/>
</dbReference>
<dbReference type="GO" id="GO:0000049">
    <property type="term" value="F:tRNA binding"/>
    <property type="evidence" value="ECO:0007669"/>
    <property type="project" value="InterPro"/>
</dbReference>
<dbReference type="GO" id="GO:0006432">
    <property type="term" value="P:phenylalanyl-tRNA aminoacylation"/>
    <property type="evidence" value="ECO:0007669"/>
    <property type="project" value="UniProtKB-UniRule"/>
</dbReference>
<dbReference type="CDD" id="cd00496">
    <property type="entry name" value="PheRS_alpha_core"/>
    <property type="match status" value="1"/>
</dbReference>
<dbReference type="FunFam" id="3.30.930.10:FF:000003">
    <property type="entry name" value="Phenylalanine--tRNA ligase alpha subunit"/>
    <property type="match status" value="1"/>
</dbReference>
<dbReference type="Gene3D" id="3.30.930.10">
    <property type="entry name" value="Bira Bifunctional Protein, Domain 2"/>
    <property type="match status" value="1"/>
</dbReference>
<dbReference type="HAMAP" id="MF_00281">
    <property type="entry name" value="Phe_tRNA_synth_alpha1"/>
    <property type="match status" value="1"/>
</dbReference>
<dbReference type="InterPro" id="IPR006195">
    <property type="entry name" value="aa-tRNA-synth_II"/>
</dbReference>
<dbReference type="InterPro" id="IPR045864">
    <property type="entry name" value="aa-tRNA-synth_II/BPL/LPL"/>
</dbReference>
<dbReference type="InterPro" id="IPR004529">
    <property type="entry name" value="Phe-tRNA-synth_IIc_asu"/>
</dbReference>
<dbReference type="InterPro" id="IPR004188">
    <property type="entry name" value="Phe-tRNA_ligase_II_N"/>
</dbReference>
<dbReference type="InterPro" id="IPR022911">
    <property type="entry name" value="Phe_tRNA_ligase_alpha1_bac"/>
</dbReference>
<dbReference type="InterPro" id="IPR002319">
    <property type="entry name" value="Phenylalanyl-tRNA_Synthase"/>
</dbReference>
<dbReference type="InterPro" id="IPR010978">
    <property type="entry name" value="tRNA-bd_arm"/>
</dbReference>
<dbReference type="NCBIfam" id="TIGR00468">
    <property type="entry name" value="pheS"/>
    <property type="match status" value="1"/>
</dbReference>
<dbReference type="PANTHER" id="PTHR11538:SF41">
    <property type="entry name" value="PHENYLALANINE--TRNA LIGASE, MITOCHONDRIAL"/>
    <property type="match status" value="1"/>
</dbReference>
<dbReference type="PANTHER" id="PTHR11538">
    <property type="entry name" value="PHENYLALANYL-TRNA SYNTHETASE"/>
    <property type="match status" value="1"/>
</dbReference>
<dbReference type="Pfam" id="PF02912">
    <property type="entry name" value="Phe_tRNA-synt_N"/>
    <property type="match status" value="1"/>
</dbReference>
<dbReference type="Pfam" id="PF01409">
    <property type="entry name" value="tRNA-synt_2d"/>
    <property type="match status" value="1"/>
</dbReference>
<dbReference type="SUPFAM" id="SSF55681">
    <property type="entry name" value="Class II aaRS and biotin synthetases"/>
    <property type="match status" value="1"/>
</dbReference>
<dbReference type="SUPFAM" id="SSF46589">
    <property type="entry name" value="tRNA-binding arm"/>
    <property type="match status" value="1"/>
</dbReference>
<dbReference type="PROSITE" id="PS50862">
    <property type="entry name" value="AA_TRNA_LIGASE_II"/>
    <property type="match status" value="1"/>
</dbReference>